<protein>
    <recommendedName>
        <fullName>Rhombotin-2</fullName>
    </recommendedName>
    <alternativeName>
        <fullName>LIM domain only protein 2</fullName>
        <shortName>LMO-2</shortName>
        <shortName>Lmo2-A</shortName>
        <shortName>xLMO-2</shortName>
    </alternativeName>
</protein>
<gene>
    <name evidence="5" type="primary">lmo2</name>
    <name type="synonym">lmo2-a</name>
</gene>
<organism>
    <name type="scientific">Xenopus laevis</name>
    <name type="common">African clawed frog</name>
    <dbReference type="NCBI Taxonomy" id="8355"/>
    <lineage>
        <taxon>Eukaryota</taxon>
        <taxon>Metazoa</taxon>
        <taxon>Chordata</taxon>
        <taxon>Craniata</taxon>
        <taxon>Vertebrata</taxon>
        <taxon>Euteleostomi</taxon>
        <taxon>Amphibia</taxon>
        <taxon>Batrachia</taxon>
        <taxon>Anura</taxon>
        <taxon>Pipoidea</taxon>
        <taxon>Pipidae</taxon>
        <taxon>Xenopodinae</taxon>
        <taxon>Xenopus</taxon>
        <taxon>Xenopus</taxon>
    </lineage>
</organism>
<accession>Q90XH3</accession>
<keyword id="KW-0217">Developmental protein</keyword>
<keyword id="KW-0440">LIM domain</keyword>
<keyword id="KW-0479">Metal-binding</keyword>
<keyword id="KW-0539">Nucleus</keyword>
<keyword id="KW-1185">Reference proteome</keyword>
<keyword id="KW-0677">Repeat</keyword>
<keyword id="KW-0862">Zinc</keyword>
<sequence length="158" mass="18350">MSSAIERKSLDPADEPVDEVLQIPPSLLTCGGCQQSIGDRYFLKAIDQYWHEDCLSCDLCGCRLGEVGRRLYYKLGRKLCRRDYLRLFGQDGLCASCDNRIRAYEMTMRVKDKVYHLECFKCAACQKHFCVGDRYLLINSDIVCEQDIYEWTKLSEMM</sequence>
<comment type="function">
    <text evidence="3">Transcription factor that acts synergistically with tal1/scl and gata1 to specify embryonic dorsal mesoderm to a hematopoietic fate. Induces globin gene expression together with fgf.</text>
</comment>
<comment type="subcellular location">
    <subcellularLocation>
        <location evidence="1">Nucleus</location>
    </subcellularLocation>
</comment>
<comment type="tissue specificity">
    <text evidence="3">Expression becomes restricted to the ventral blood island (VBI) as the embryo develops. In late neurula and early tailbud embryos, also expressed in the dorsal lateral plate (DLP), the site of definitive hematopoiesis in the tadpole. Expression in the DLP diminishes during tailbud stages. Expressed in circulating blood cells of tadpoles. Also expressed in non-hematopoietic sites, including the tailbud region and the central nervous system of early neurula embryos.</text>
</comment>
<comment type="developmental stage">
    <text evidence="3">Zygotic expression begins after gastrulation at stage 12.5.</text>
</comment>
<comment type="induction">
    <text evidence="3 4">By bmp-signaling. Inhibition by fgf regulates the timing of hematopoiesis.</text>
</comment>
<proteinExistence type="evidence at transcript level"/>
<reference evidence="6 8" key="1">
    <citation type="journal article" date="2001" name="Development">
        <title>Primitive erythropoiesis in the Xenopus embryo: the synergistic role of LMO-2, SCL and GATA-binding proteins.</title>
        <authorList>
            <person name="Mead P.E."/>
            <person name="Deconinck A.E."/>
            <person name="Huber T.L."/>
            <person name="Orkin S.H."/>
            <person name="Zon L.I."/>
        </authorList>
    </citation>
    <scope>NUCLEOTIDE SEQUENCE [MRNA]</scope>
    <scope>FUNCTION</scope>
    <scope>TISSUE SPECIFICITY</scope>
    <scope>DEVELOPMENTAL STAGE</scope>
    <scope>INDUCTION</scope>
    <source>
        <tissue evidence="3">Spleen</tissue>
    </source>
</reference>
<reference evidence="7" key="2">
    <citation type="submission" date="2005-06" db="EMBL/GenBank/DDBJ databases">
        <authorList>
            <consortium name="NIH - Xenopus Gene Collection (XGC) project"/>
        </authorList>
    </citation>
    <scope>NUCLEOTIDE SEQUENCE [LARGE SCALE MRNA]</scope>
    <source>
        <tissue evidence="7">Spleen</tissue>
    </source>
</reference>
<reference evidence="6" key="3">
    <citation type="journal article" date="2008" name="Blood">
        <title>Fibroblast growth factor controls the timing of Scl, Lmo2, and Runx1 expression during embryonic blood development.</title>
        <authorList>
            <person name="Walmsley M."/>
            <person name="Cleaver D."/>
            <person name="Patient R.K."/>
        </authorList>
    </citation>
    <scope>INDUCTION</scope>
</reference>
<feature type="chain" id="PRO_0000318112" description="Rhombotin-2">
    <location>
        <begin position="1"/>
        <end position="158"/>
    </location>
</feature>
<feature type="domain" description="LIM zinc-binding 1" evidence="2">
    <location>
        <begin position="28"/>
        <end position="90"/>
    </location>
</feature>
<feature type="domain" description="LIM zinc-binding 2" evidence="2">
    <location>
        <begin position="92"/>
        <end position="154"/>
    </location>
</feature>
<evidence type="ECO:0000250" key="1">
    <source>
        <dbReference type="UniProtKB" id="P25801"/>
    </source>
</evidence>
<evidence type="ECO:0000255" key="2">
    <source>
        <dbReference type="PROSITE-ProRule" id="PRU00125"/>
    </source>
</evidence>
<evidence type="ECO:0000269" key="3">
    <source>
    </source>
</evidence>
<evidence type="ECO:0000269" key="4">
    <source>
    </source>
</evidence>
<evidence type="ECO:0000303" key="5">
    <source>
    </source>
</evidence>
<evidence type="ECO:0000305" key="6"/>
<evidence type="ECO:0000312" key="7">
    <source>
        <dbReference type="EMBL" id="AAH97502.1"/>
    </source>
</evidence>
<evidence type="ECO:0000312" key="8">
    <source>
        <dbReference type="EMBL" id="AAK54614.1"/>
    </source>
</evidence>
<name>RBTN2_XENLA</name>
<dbReference type="EMBL" id="AF374473">
    <property type="protein sequence ID" value="AAK54614.1"/>
    <property type="molecule type" value="mRNA"/>
</dbReference>
<dbReference type="EMBL" id="BC097502">
    <property type="protein sequence ID" value="AAH97502.1"/>
    <property type="molecule type" value="mRNA"/>
</dbReference>
<dbReference type="RefSeq" id="NP_001081112.1">
    <property type="nucleotide sequence ID" value="NM_001087643.1"/>
</dbReference>
<dbReference type="SMR" id="Q90XH3"/>
<dbReference type="DNASU" id="394388"/>
<dbReference type="GeneID" id="394388"/>
<dbReference type="KEGG" id="xla:394388"/>
<dbReference type="AGR" id="Xenbase:XB-GENE-6254426"/>
<dbReference type="CTD" id="394388"/>
<dbReference type="Xenbase" id="XB-GENE-6254426">
    <property type="gene designation" value="lmo2.S"/>
</dbReference>
<dbReference type="OMA" id="NIVCEDH"/>
<dbReference type="OrthoDB" id="6352355at2759"/>
<dbReference type="Proteomes" id="UP000186698">
    <property type="component" value="Chromosome 4S"/>
</dbReference>
<dbReference type="Bgee" id="394388">
    <property type="expression patterns" value="Expressed in lung and 15 other cell types or tissues"/>
</dbReference>
<dbReference type="GO" id="GO:0005634">
    <property type="term" value="C:nucleus"/>
    <property type="evidence" value="ECO:0000250"/>
    <property type="project" value="UniProtKB"/>
</dbReference>
<dbReference type="GO" id="GO:0032991">
    <property type="term" value="C:protein-containing complex"/>
    <property type="evidence" value="ECO:0000250"/>
    <property type="project" value="UniProtKB"/>
</dbReference>
<dbReference type="GO" id="GO:0140297">
    <property type="term" value="F:DNA-binding transcription factor binding"/>
    <property type="evidence" value="ECO:0000318"/>
    <property type="project" value="GO_Central"/>
</dbReference>
<dbReference type="GO" id="GO:0046872">
    <property type="term" value="F:metal ion binding"/>
    <property type="evidence" value="ECO:0007669"/>
    <property type="project" value="UniProtKB-KW"/>
</dbReference>
<dbReference type="GO" id="GO:0003713">
    <property type="term" value="F:transcription coactivator activity"/>
    <property type="evidence" value="ECO:0000318"/>
    <property type="project" value="GO_Central"/>
</dbReference>
<dbReference type="GO" id="GO:0030218">
    <property type="term" value="P:erythrocyte differentiation"/>
    <property type="evidence" value="ECO:0000316"/>
    <property type="project" value="UniProtKB"/>
</dbReference>
<dbReference type="GO" id="GO:0045944">
    <property type="term" value="P:positive regulation of transcription by RNA polymerase II"/>
    <property type="evidence" value="ECO:0000318"/>
    <property type="project" value="GO_Central"/>
</dbReference>
<dbReference type="CDD" id="cd09384">
    <property type="entry name" value="LIM1_LMO2"/>
    <property type="match status" value="1"/>
</dbReference>
<dbReference type="FunFam" id="2.10.110.10:FF:000059">
    <property type="entry name" value="LIM domain only 2"/>
    <property type="match status" value="1"/>
</dbReference>
<dbReference type="FunFam" id="2.10.110.10:FF:000016">
    <property type="entry name" value="LIM domain only 3"/>
    <property type="match status" value="1"/>
</dbReference>
<dbReference type="Gene3D" id="2.10.110.10">
    <property type="entry name" value="Cysteine Rich Protein"/>
    <property type="match status" value="2"/>
</dbReference>
<dbReference type="InterPro" id="IPR050945">
    <property type="entry name" value="LMO_RBTN_TF"/>
</dbReference>
<dbReference type="InterPro" id="IPR001781">
    <property type="entry name" value="Znf_LIM"/>
</dbReference>
<dbReference type="PANTHER" id="PTHR45787">
    <property type="entry name" value="LD11652P"/>
    <property type="match status" value="1"/>
</dbReference>
<dbReference type="PANTHER" id="PTHR45787:SF3">
    <property type="entry name" value="RHOMBOTIN-2"/>
    <property type="match status" value="1"/>
</dbReference>
<dbReference type="Pfam" id="PF00412">
    <property type="entry name" value="LIM"/>
    <property type="match status" value="2"/>
</dbReference>
<dbReference type="SMART" id="SM00132">
    <property type="entry name" value="LIM"/>
    <property type="match status" value="2"/>
</dbReference>
<dbReference type="SUPFAM" id="SSF57716">
    <property type="entry name" value="Glucocorticoid receptor-like (DNA-binding domain)"/>
    <property type="match status" value="3"/>
</dbReference>
<dbReference type="PROSITE" id="PS00478">
    <property type="entry name" value="LIM_DOMAIN_1"/>
    <property type="match status" value="2"/>
</dbReference>
<dbReference type="PROSITE" id="PS50023">
    <property type="entry name" value="LIM_DOMAIN_2"/>
    <property type="match status" value="2"/>
</dbReference>